<accession>Q8S8U7</accession>
<keyword id="KW-0150">Chloroplast</keyword>
<keyword id="KW-0472">Membrane</keyword>
<keyword id="KW-0520">NAD</keyword>
<keyword id="KW-0521">NADP</keyword>
<keyword id="KW-0934">Plastid</keyword>
<keyword id="KW-0618">Plastoquinone</keyword>
<keyword id="KW-0874">Quinone</keyword>
<keyword id="KW-0793">Thylakoid</keyword>
<keyword id="KW-1278">Translocase</keyword>
<keyword id="KW-0812">Transmembrane</keyword>
<keyword id="KW-1133">Transmembrane helix</keyword>
<name>NU4C_ATRBE</name>
<protein>
    <recommendedName>
        <fullName evidence="1">NAD(P)H-quinone oxidoreductase chain 4, chloroplastic</fullName>
        <ecNumber evidence="1">7.1.1.-</ecNumber>
    </recommendedName>
    <alternativeName>
        <fullName evidence="1">NAD(P)H dehydrogenase, chain 4</fullName>
    </alternativeName>
    <alternativeName>
        <fullName evidence="1">NADH-plastoquinone oxidoreductase chain 4</fullName>
    </alternativeName>
</protein>
<geneLocation type="chloroplast"/>
<proteinExistence type="inferred from homology"/>
<sequence>MNYFPWLTIIVVFPIFAGSLIFFLPHKGNRVIRWYTICICILELLLTTYAFCYHFQLDDPLIQLVEDYKWIDFFDFHWRLGIDGLSIGPILLTGFITTLATLAAWPITRDSRLFHFIMLAMYSGQIGSFSSRDLLLFFIMWELELIPVYLLLAMWGGKKRLYSATKFILYTAGGSVFLLMGVLGVALYGSNEPTLNFETLVNQSYPVVLEIIFYIGFFIAFAVKLPIIPLHTWLPDTHGEAHYSTCMLLAGILLKMGAYGLIRINMELLPHAHSIFSPWLMIIGTIQIIYAASTSLGQRNLKKRIAYSSVSHMGFIIIGISSLTDTGLNGALLQIISHGFIGAALFFLAGTTYDRIRLVYLDEMGGIAIPMPKMFTMFSSFSMASLALPGMSGFVAELIVFFGIITGQKYVLIPKILITFVMAIGMILTPIYSLSMSRQMFYGYKLFNAPKDSFFDSGPRELFLSISIFLPVIGIGIYPDFVLSLAVDKVEVILSNFFYR</sequence>
<gene>
    <name evidence="1" type="primary">ndhD</name>
</gene>
<reference key="1">
    <citation type="journal article" date="2002" name="Mol. Biol. Evol.">
        <title>The plastid chromosome of Atropa belladonna and its comparison with that of Nicotiana tabacum: the role of RNA editing in generating divergence in the process of plant speciation.</title>
        <authorList>
            <person name="Schmitz-Linneweber C."/>
            <person name="Regel R."/>
            <person name="Du T.G."/>
            <person name="Hupfer H."/>
            <person name="Herrmann R.G."/>
            <person name="Maier R.M."/>
        </authorList>
    </citation>
    <scope>NUCLEOTIDE SEQUENCE [LARGE SCALE GENOMIC DNA]</scope>
    <source>
        <strain>cv. Ab5p(kan)</strain>
    </source>
</reference>
<dbReference type="EC" id="7.1.1.-" evidence="1"/>
<dbReference type="EMBL" id="AJ316582">
    <property type="protein sequence ID" value="CAC88096.1"/>
    <property type="molecule type" value="Genomic_DNA"/>
</dbReference>
<dbReference type="RefSeq" id="NP_783282.1">
    <property type="nucleotide sequence ID" value="NC_004561.1"/>
</dbReference>
<dbReference type="SMR" id="Q8S8U7"/>
<dbReference type="GeneID" id="806495"/>
<dbReference type="GO" id="GO:0009535">
    <property type="term" value="C:chloroplast thylakoid membrane"/>
    <property type="evidence" value="ECO:0007669"/>
    <property type="project" value="UniProtKB-SubCell"/>
</dbReference>
<dbReference type="GO" id="GO:0008137">
    <property type="term" value="F:NADH dehydrogenase (ubiquinone) activity"/>
    <property type="evidence" value="ECO:0007669"/>
    <property type="project" value="InterPro"/>
</dbReference>
<dbReference type="GO" id="GO:0048039">
    <property type="term" value="F:ubiquinone binding"/>
    <property type="evidence" value="ECO:0007669"/>
    <property type="project" value="TreeGrafter"/>
</dbReference>
<dbReference type="GO" id="GO:0042773">
    <property type="term" value="P:ATP synthesis coupled electron transport"/>
    <property type="evidence" value="ECO:0007669"/>
    <property type="project" value="InterPro"/>
</dbReference>
<dbReference type="GO" id="GO:0015990">
    <property type="term" value="P:electron transport coupled proton transport"/>
    <property type="evidence" value="ECO:0007669"/>
    <property type="project" value="TreeGrafter"/>
</dbReference>
<dbReference type="HAMAP" id="MF_00491">
    <property type="entry name" value="NDH1_NuoM"/>
    <property type="match status" value="1"/>
</dbReference>
<dbReference type="InterPro" id="IPR022997">
    <property type="entry name" value="NADH_Q_OxRdtase_chain4"/>
</dbReference>
<dbReference type="InterPro" id="IPR010227">
    <property type="entry name" value="NADH_Q_OxRdtase_chainM/4"/>
</dbReference>
<dbReference type="InterPro" id="IPR003918">
    <property type="entry name" value="NADH_UbQ_OxRdtase"/>
</dbReference>
<dbReference type="InterPro" id="IPR001750">
    <property type="entry name" value="ND/Mrp_TM"/>
</dbReference>
<dbReference type="NCBIfam" id="TIGR01972">
    <property type="entry name" value="NDH_I_M"/>
    <property type="match status" value="1"/>
</dbReference>
<dbReference type="PANTHER" id="PTHR43507:SF21">
    <property type="entry name" value="NAD(P)H-QUINONE OXIDOREDUCTASE CHAIN 4, CHLOROPLASTIC"/>
    <property type="match status" value="1"/>
</dbReference>
<dbReference type="PANTHER" id="PTHR43507">
    <property type="entry name" value="NADH-UBIQUINONE OXIDOREDUCTASE CHAIN 4"/>
    <property type="match status" value="1"/>
</dbReference>
<dbReference type="Pfam" id="PF00361">
    <property type="entry name" value="Proton_antipo_M"/>
    <property type="match status" value="1"/>
</dbReference>
<dbReference type="PRINTS" id="PR01437">
    <property type="entry name" value="NUOXDRDTASE4"/>
</dbReference>
<evidence type="ECO:0000255" key="1">
    <source>
        <dbReference type="HAMAP-Rule" id="MF_00491"/>
    </source>
</evidence>
<organism>
    <name type="scientific">Atropa belladonna</name>
    <name type="common">Belladonna</name>
    <name type="synonym">Deadly nightshade</name>
    <dbReference type="NCBI Taxonomy" id="33113"/>
    <lineage>
        <taxon>Eukaryota</taxon>
        <taxon>Viridiplantae</taxon>
        <taxon>Streptophyta</taxon>
        <taxon>Embryophyta</taxon>
        <taxon>Tracheophyta</taxon>
        <taxon>Spermatophyta</taxon>
        <taxon>Magnoliopsida</taxon>
        <taxon>eudicotyledons</taxon>
        <taxon>Gunneridae</taxon>
        <taxon>Pentapetalae</taxon>
        <taxon>asterids</taxon>
        <taxon>lamiids</taxon>
        <taxon>Solanales</taxon>
        <taxon>Solanaceae</taxon>
        <taxon>Solanoideae</taxon>
        <taxon>Hyoscyameae</taxon>
        <taxon>Atropa</taxon>
    </lineage>
</organism>
<comment type="catalytic activity">
    <reaction evidence="1">
        <text>a plastoquinone + NADH + (n+1) H(+)(in) = a plastoquinol + NAD(+) + n H(+)(out)</text>
        <dbReference type="Rhea" id="RHEA:42608"/>
        <dbReference type="Rhea" id="RHEA-COMP:9561"/>
        <dbReference type="Rhea" id="RHEA-COMP:9562"/>
        <dbReference type="ChEBI" id="CHEBI:15378"/>
        <dbReference type="ChEBI" id="CHEBI:17757"/>
        <dbReference type="ChEBI" id="CHEBI:57540"/>
        <dbReference type="ChEBI" id="CHEBI:57945"/>
        <dbReference type="ChEBI" id="CHEBI:62192"/>
    </reaction>
</comment>
<comment type="catalytic activity">
    <reaction evidence="1">
        <text>a plastoquinone + NADPH + (n+1) H(+)(in) = a plastoquinol + NADP(+) + n H(+)(out)</text>
        <dbReference type="Rhea" id="RHEA:42612"/>
        <dbReference type="Rhea" id="RHEA-COMP:9561"/>
        <dbReference type="Rhea" id="RHEA-COMP:9562"/>
        <dbReference type="ChEBI" id="CHEBI:15378"/>
        <dbReference type="ChEBI" id="CHEBI:17757"/>
        <dbReference type="ChEBI" id="CHEBI:57783"/>
        <dbReference type="ChEBI" id="CHEBI:58349"/>
        <dbReference type="ChEBI" id="CHEBI:62192"/>
    </reaction>
</comment>
<comment type="subcellular location">
    <subcellularLocation>
        <location evidence="1">Plastid</location>
        <location evidence="1">Chloroplast thylakoid membrane</location>
        <topology evidence="1">Multi-pass membrane protein</topology>
    </subcellularLocation>
</comment>
<comment type="similarity">
    <text evidence="1">Belongs to the complex I subunit 4 family.</text>
</comment>
<feature type="chain" id="PRO_0000275468" description="NAD(P)H-quinone oxidoreductase chain 4, chloroplastic">
    <location>
        <begin position="1"/>
        <end position="500"/>
    </location>
</feature>
<feature type="transmembrane region" description="Helical" evidence="1">
    <location>
        <begin position="4"/>
        <end position="24"/>
    </location>
</feature>
<feature type="transmembrane region" description="Helical" evidence="1">
    <location>
        <begin position="37"/>
        <end position="57"/>
    </location>
</feature>
<feature type="transmembrane region" description="Helical" evidence="1">
    <location>
        <begin position="87"/>
        <end position="107"/>
    </location>
</feature>
<feature type="transmembrane region" description="Helical" evidence="1">
    <location>
        <begin position="113"/>
        <end position="130"/>
    </location>
</feature>
<feature type="transmembrane region" description="Helical" evidence="1">
    <location>
        <begin position="134"/>
        <end position="154"/>
    </location>
</feature>
<feature type="transmembrane region" description="Helical" evidence="1">
    <location>
        <begin position="167"/>
        <end position="187"/>
    </location>
</feature>
<feature type="transmembrane region" description="Helical" evidence="1">
    <location>
        <begin position="208"/>
        <end position="228"/>
    </location>
</feature>
<feature type="transmembrane region" description="Helical" evidence="1">
    <location>
        <begin position="242"/>
        <end position="262"/>
    </location>
</feature>
<feature type="transmembrane region" description="Helical" evidence="1">
    <location>
        <begin position="272"/>
        <end position="292"/>
    </location>
</feature>
<feature type="transmembrane region" description="Helical" evidence="1">
    <location>
        <begin position="305"/>
        <end position="325"/>
    </location>
</feature>
<feature type="transmembrane region" description="Helical" evidence="1">
    <location>
        <begin position="330"/>
        <end position="350"/>
    </location>
</feature>
<feature type="transmembrane region" description="Helical" evidence="1">
    <location>
        <begin position="386"/>
        <end position="406"/>
    </location>
</feature>
<feature type="transmembrane region" description="Helical" evidence="1">
    <location>
        <begin position="411"/>
        <end position="431"/>
    </location>
</feature>
<feature type="transmembrane region" description="Helical" evidence="1">
    <location>
        <begin position="462"/>
        <end position="482"/>
    </location>
</feature>